<proteinExistence type="inferred from homology"/>
<organismHost>
    <name type="scientific">Ornithodoros</name>
    <name type="common">relapsing fever ticks</name>
    <dbReference type="NCBI Taxonomy" id="6937"/>
</organismHost>
<organismHost>
    <name type="scientific">Phacochoerus aethiopicus</name>
    <name type="common">Warthog</name>
    <dbReference type="NCBI Taxonomy" id="85517"/>
</organismHost>
<organismHost>
    <name type="scientific">Phacochoerus africanus</name>
    <name type="common">Warthog</name>
    <dbReference type="NCBI Taxonomy" id="41426"/>
</organismHost>
<organismHost>
    <name type="scientific">Potamochoerus larvatus</name>
    <name type="common">Bushpig</name>
    <dbReference type="NCBI Taxonomy" id="273792"/>
</organismHost>
<organismHost>
    <name type="scientific">Sus scrofa</name>
    <name type="common">Pig</name>
    <dbReference type="NCBI Taxonomy" id="9823"/>
</organismHost>
<dbReference type="EMBL" id="AY261366">
    <property type="status" value="NOT_ANNOTATED_CDS"/>
    <property type="molecule type" value="Genomic_DNA"/>
</dbReference>
<dbReference type="SMR" id="P0CA58"/>
<dbReference type="Proteomes" id="UP000000858">
    <property type="component" value="Segment"/>
</dbReference>
<dbReference type="GO" id="GO:0046872">
    <property type="term" value="F:metal ion binding"/>
    <property type="evidence" value="ECO:0007669"/>
    <property type="project" value="UniProtKB-KW"/>
</dbReference>
<reference key="1">
    <citation type="submission" date="2003-03" db="EMBL/GenBank/DDBJ databases">
        <title>African swine fever virus genomes.</title>
        <authorList>
            <person name="Kutish G.F."/>
            <person name="Rock D.L."/>
        </authorList>
    </citation>
    <scope>NUCLEOTIDE SEQUENCE [LARGE SCALE GENOMIC DNA]</scope>
</reference>
<sequence length="151" mass="17597">MMALLHKEKLIECIENEVLSGGTVLLLVKNIVVSEISYMGDSYKYFTFNANHDLKSKEDLKGATSKNIAKMIYNWIIKNPQNNKIWSGEPRTQIYFENDLYHTNYNHECIKDFWNVSTSVGPCIFNDRSIWCTKCTSFYPFTNIMSPNIFQ</sequence>
<keyword id="KW-0244">Early protein</keyword>
<keyword id="KW-0479">Metal-binding</keyword>
<keyword id="KW-0862">Zinc</keyword>
<comment type="function">
    <text evidence="1">May participate in a redox cascade for the formation of disulfide bonds in viral proteins.</text>
</comment>
<comment type="cofactor">
    <cofactor evidence="1">
        <name>Zn(2+)</name>
        <dbReference type="ChEBI" id="CHEBI:29105"/>
    </cofactor>
    <text evidence="1">Binds 1 Zn(2+) ion.</text>
</comment>
<comment type="subunit">
    <text evidence="1">Monomer (By similarity). Homodimer (By similarity). Interacts with protein B119L (By similarity). Interacts with membrane protein E248R (By similarity).</text>
</comment>
<comment type="induction">
    <text evidence="2">Expressed in the early phase of the viral replicative cycle.</text>
</comment>
<comment type="similarity">
    <text evidence="2">Belongs to the asfivirus A151R family.</text>
</comment>
<gene>
    <name type="ordered locus">War-047</name>
</gene>
<organism>
    <name type="scientific">African swine fever virus (isolate Warthog/Namibia/Wart80/1980)</name>
    <name type="common">ASFV</name>
    <dbReference type="NCBI Taxonomy" id="561444"/>
    <lineage>
        <taxon>Viruses</taxon>
        <taxon>Varidnaviria</taxon>
        <taxon>Bamfordvirae</taxon>
        <taxon>Nucleocytoviricota</taxon>
        <taxon>Pokkesviricetes</taxon>
        <taxon>Asfuvirales</taxon>
        <taxon>Asfarviridae</taxon>
        <taxon>Asfivirus</taxon>
        <taxon>African swine fever virus</taxon>
    </lineage>
</organism>
<evidence type="ECO:0000250" key="1">
    <source>
        <dbReference type="UniProtKB" id="Q65140"/>
    </source>
</evidence>
<evidence type="ECO:0000305" key="2"/>
<feature type="chain" id="PRO_0000373533" description="Protein A151R">
    <location>
        <begin position="1"/>
        <end position="151"/>
    </location>
</feature>
<accession>P0CA58</accession>
<protein>
    <recommendedName>
        <fullName>Protein A151R</fullName>
        <shortName>pA151R</shortName>
    </recommendedName>
</protein>
<name>VF151_ASFWA</name>